<protein>
    <recommendedName>
        <fullName evidence="1">4-hydroxy-3-methylbut-2-enyl diphosphate reductase</fullName>
        <shortName evidence="1">HMBPP reductase</shortName>
        <ecNumber evidence="1">1.17.7.4</ecNumber>
    </recommendedName>
</protein>
<comment type="function">
    <text evidence="1">Catalyzes the conversion of 1-hydroxy-2-methyl-2-(E)-butenyl 4-diphosphate (HMBPP) into a mixture of isopentenyl diphosphate (IPP) and dimethylallyl diphosphate (DMAPP). Acts in the terminal step of the DOXP/MEP pathway for isoprenoid precursor biosynthesis.</text>
</comment>
<comment type="catalytic activity">
    <reaction evidence="1">
        <text>isopentenyl diphosphate + 2 oxidized [2Fe-2S]-[ferredoxin] + H2O = (2E)-4-hydroxy-3-methylbut-2-enyl diphosphate + 2 reduced [2Fe-2S]-[ferredoxin] + 2 H(+)</text>
        <dbReference type="Rhea" id="RHEA:24488"/>
        <dbReference type="Rhea" id="RHEA-COMP:10000"/>
        <dbReference type="Rhea" id="RHEA-COMP:10001"/>
        <dbReference type="ChEBI" id="CHEBI:15377"/>
        <dbReference type="ChEBI" id="CHEBI:15378"/>
        <dbReference type="ChEBI" id="CHEBI:33737"/>
        <dbReference type="ChEBI" id="CHEBI:33738"/>
        <dbReference type="ChEBI" id="CHEBI:128753"/>
        <dbReference type="ChEBI" id="CHEBI:128769"/>
        <dbReference type="EC" id="1.17.7.4"/>
    </reaction>
</comment>
<comment type="catalytic activity">
    <reaction evidence="1">
        <text>dimethylallyl diphosphate + 2 oxidized [2Fe-2S]-[ferredoxin] + H2O = (2E)-4-hydroxy-3-methylbut-2-enyl diphosphate + 2 reduced [2Fe-2S]-[ferredoxin] + 2 H(+)</text>
        <dbReference type="Rhea" id="RHEA:24825"/>
        <dbReference type="Rhea" id="RHEA-COMP:10000"/>
        <dbReference type="Rhea" id="RHEA-COMP:10001"/>
        <dbReference type="ChEBI" id="CHEBI:15377"/>
        <dbReference type="ChEBI" id="CHEBI:15378"/>
        <dbReference type="ChEBI" id="CHEBI:33737"/>
        <dbReference type="ChEBI" id="CHEBI:33738"/>
        <dbReference type="ChEBI" id="CHEBI:57623"/>
        <dbReference type="ChEBI" id="CHEBI:128753"/>
        <dbReference type="EC" id="1.17.7.4"/>
    </reaction>
</comment>
<comment type="cofactor">
    <cofactor evidence="1">
        <name>[4Fe-4S] cluster</name>
        <dbReference type="ChEBI" id="CHEBI:49883"/>
    </cofactor>
    <text evidence="1">Binds 1 [4Fe-4S] cluster per subunit.</text>
</comment>
<comment type="pathway">
    <text evidence="1">Isoprenoid biosynthesis; dimethylallyl diphosphate biosynthesis; dimethylallyl diphosphate from (2E)-4-hydroxy-3-methylbutenyl diphosphate: step 1/1.</text>
</comment>
<comment type="pathway">
    <text evidence="1">Isoprenoid biosynthesis; isopentenyl diphosphate biosynthesis via DXP pathway; isopentenyl diphosphate from 1-deoxy-D-xylulose 5-phosphate: step 6/6.</text>
</comment>
<comment type="subunit">
    <text evidence="1">Homodimer.</text>
</comment>
<comment type="similarity">
    <text evidence="1">Belongs to the IspH family.</text>
</comment>
<proteinExistence type="inferred from homology"/>
<keyword id="KW-0004">4Fe-4S</keyword>
<keyword id="KW-0408">Iron</keyword>
<keyword id="KW-0411">Iron-sulfur</keyword>
<keyword id="KW-0414">Isoprene biosynthesis</keyword>
<keyword id="KW-0479">Metal-binding</keyword>
<keyword id="KW-0560">Oxidoreductase</keyword>
<evidence type="ECO:0000255" key="1">
    <source>
        <dbReference type="HAMAP-Rule" id="MF_00191"/>
    </source>
</evidence>
<sequence>MQILLANPRGFCAGVDRAISIVENALEIYGAPIYVRHEVVHNRYVVESLRERGAIFIEQISEVPDGTILIFSAHGVSQAVRNEAKSRDLTVFDATCPLVTKVHMEVARASRRGEESILIGHAGHPEVEGTMGQYSNPEGGMYLVESPEDVLTLNVKNDAKLSFMTQTTLSVDDTSDVIDALRKRFPKIVGPRKDDICYATTNRQEAVRALAEQADVVLVVGSKNSSNSNRLAELAQRMGKTAFLIDDATDIQEAWVKDVNCVGVTAGASAPDILVQNVIARLQELGGGDAIPLEGREENIVFEVPKELRIDAREVE</sequence>
<name>ISPH_ENT38</name>
<dbReference type="EC" id="1.17.7.4" evidence="1"/>
<dbReference type="EMBL" id="CP000653">
    <property type="protein sequence ID" value="ABP59274.1"/>
    <property type="molecule type" value="Genomic_DNA"/>
</dbReference>
<dbReference type="RefSeq" id="WP_012015996.1">
    <property type="nucleotide sequence ID" value="NC_009436.1"/>
</dbReference>
<dbReference type="SMR" id="A4W6E4"/>
<dbReference type="STRING" id="399742.Ent638_0587"/>
<dbReference type="KEGG" id="ent:Ent638_0587"/>
<dbReference type="eggNOG" id="COG0761">
    <property type="taxonomic scope" value="Bacteria"/>
</dbReference>
<dbReference type="HOGENOM" id="CLU_027486_1_0_6"/>
<dbReference type="OrthoDB" id="9804068at2"/>
<dbReference type="UniPathway" id="UPA00056">
    <property type="reaction ID" value="UER00097"/>
</dbReference>
<dbReference type="UniPathway" id="UPA00059">
    <property type="reaction ID" value="UER00105"/>
</dbReference>
<dbReference type="Proteomes" id="UP000000230">
    <property type="component" value="Chromosome"/>
</dbReference>
<dbReference type="GO" id="GO:0051539">
    <property type="term" value="F:4 iron, 4 sulfur cluster binding"/>
    <property type="evidence" value="ECO:0007669"/>
    <property type="project" value="UniProtKB-UniRule"/>
</dbReference>
<dbReference type="GO" id="GO:0051745">
    <property type="term" value="F:4-hydroxy-3-methylbut-2-enyl diphosphate reductase activity"/>
    <property type="evidence" value="ECO:0007669"/>
    <property type="project" value="UniProtKB-UniRule"/>
</dbReference>
<dbReference type="GO" id="GO:0046872">
    <property type="term" value="F:metal ion binding"/>
    <property type="evidence" value="ECO:0007669"/>
    <property type="project" value="UniProtKB-KW"/>
</dbReference>
<dbReference type="GO" id="GO:0050992">
    <property type="term" value="P:dimethylallyl diphosphate biosynthetic process"/>
    <property type="evidence" value="ECO:0007669"/>
    <property type="project" value="UniProtKB-UniRule"/>
</dbReference>
<dbReference type="GO" id="GO:0019288">
    <property type="term" value="P:isopentenyl diphosphate biosynthetic process, methylerythritol 4-phosphate pathway"/>
    <property type="evidence" value="ECO:0007669"/>
    <property type="project" value="UniProtKB-UniRule"/>
</dbReference>
<dbReference type="GO" id="GO:0016114">
    <property type="term" value="P:terpenoid biosynthetic process"/>
    <property type="evidence" value="ECO:0007669"/>
    <property type="project" value="UniProtKB-UniRule"/>
</dbReference>
<dbReference type="CDD" id="cd13944">
    <property type="entry name" value="lytB_ispH"/>
    <property type="match status" value="1"/>
</dbReference>
<dbReference type="FunFam" id="3.40.1010.20:FF:000001">
    <property type="entry name" value="4-hydroxy-3-methylbut-2-enyl diphosphate reductase"/>
    <property type="match status" value="1"/>
</dbReference>
<dbReference type="FunFam" id="3.40.50.11270:FF:000001">
    <property type="entry name" value="4-hydroxy-3-methylbut-2-enyl diphosphate reductase"/>
    <property type="match status" value="1"/>
</dbReference>
<dbReference type="Gene3D" id="3.40.50.11270">
    <property type="match status" value="1"/>
</dbReference>
<dbReference type="Gene3D" id="3.40.1010.20">
    <property type="entry name" value="4-hydroxy-3-methylbut-2-enyl diphosphate reductase, catalytic domain"/>
    <property type="match status" value="2"/>
</dbReference>
<dbReference type="HAMAP" id="MF_00191">
    <property type="entry name" value="IspH"/>
    <property type="match status" value="1"/>
</dbReference>
<dbReference type="InterPro" id="IPR003451">
    <property type="entry name" value="LytB/IspH"/>
</dbReference>
<dbReference type="NCBIfam" id="TIGR00216">
    <property type="entry name" value="ispH_lytB"/>
    <property type="match status" value="1"/>
</dbReference>
<dbReference type="NCBIfam" id="NF002188">
    <property type="entry name" value="PRK01045.1-2"/>
    <property type="match status" value="1"/>
</dbReference>
<dbReference type="NCBIfam" id="NF002190">
    <property type="entry name" value="PRK01045.1-4"/>
    <property type="match status" value="1"/>
</dbReference>
<dbReference type="PANTHER" id="PTHR30426">
    <property type="entry name" value="4-HYDROXY-3-METHYLBUT-2-ENYL DIPHOSPHATE REDUCTASE"/>
    <property type="match status" value="1"/>
</dbReference>
<dbReference type="PANTHER" id="PTHR30426:SF0">
    <property type="entry name" value="4-HYDROXY-3-METHYLBUT-2-ENYL DIPHOSPHATE REDUCTASE"/>
    <property type="match status" value="1"/>
</dbReference>
<dbReference type="Pfam" id="PF02401">
    <property type="entry name" value="LYTB"/>
    <property type="match status" value="1"/>
</dbReference>
<feature type="chain" id="PRO_1000058506" description="4-hydroxy-3-methylbut-2-enyl diphosphate reductase">
    <location>
        <begin position="1"/>
        <end position="316"/>
    </location>
</feature>
<feature type="active site" description="Proton donor" evidence="1">
    <location>
        <position position="126"/>
    </location>
</feature>
<feature type="binding site" evidence="1">
    <location>
        <position position="12"/>
    </location>
    <ligand>
        <name>[4Fe-4S] cluster</name>
        <dbReference type="ChEBI" id="CHEBI:49883"/>
    </ligand>
</feature>
<feature type="binding site" evidence="1">
    <location>
        <position position="41"/>
    </location>
    <ligand>
        <name>(2E)-4-hydroxy-3-methylbut-2-enyl diphosphate</name>
        <dbReference type="ChEBI" id="CHEBI:128753"/>
    </ligand>
</feature>
<feature type="binding site" evidence="1">
    <location>
        <position position="41"/>
    </location>
    <ligand>
        <name>dimethylallyl diphosphate</name>
        <dbReference type="ChEBI" id="CHEBI:57623"/>
    </ligand>
</feature>
<feature type="binding site" evidence="1">
    <location>
        <position position="41"/>
    </location>
    <ligand>
        <name>isopentenyl diphosphate</name>
        <dbReference type="ChEBI" id="CHEBI:128769"/>
    </ligand>
</feature>
<feature type="binding site" evidence="1">
    <location>
        <position position="74"/>
    </location>
    <ligand>
        <name>(2E)-4-hydroxy-3-methylbut-2-enyl diphosphate</name>
        <dbReference type="ChEBI" id="CHEBI:128753"/>
    </ligand>
</feature>
<feature type="binding site" evidence="1">
    <location>
        <position position="74"/>
    </location>
    <ligand>
        <name>dimethylallyl diphosphate</name>
        <dbReference type="ChEBI" id="CHEBI:57623"/>
    </ligand>
</feature>
<feature type="binding site" evidence="1">
    <location>
        <position position="74"/>
    </location>
    <ligand>
        <name>isopentenyl diphosphate</name>
        <dbReference type="ChEBI" id="CHEBI:128769"/>
    </ligand>
</feature>
<feature type="binding site" evidence="1">
    <location>
        <position position="96"/>
    </location>
    <ligand>
        <name>[4Fe-4S] cluster</name>
        <dbReference type="ChEBI" id="CHEBI:49883"/>
    </ligand>
</feature>
<feature type="binding site" evidence="1">
    <location>
        <position position="124"/>
    </location>
    <ligand>
        <name>(2E)-4-hydroxy-3-methylbut-2-enyl diphosphate</name>
        <dbReference type="ChEBI" id="CHEBI:128753"/>
    </ligand>
</feature>
<feature type="binding site" evidence="1">
    <location>
        <position position="124"/>
    </location>
    <ligand>
        <name>dimethylallyl diphosphate</name>
        <dbReference type="ChEBI" id="CHEBI:57623"/>
    </ligand>
</feature>
<feature type="binding site" evidence="1">
    <location>
        <position position="124"/>
    </location>
    <ligand>
        <name>isopentenyl diphosphate</name>
        <dbReference type="ChEBI" id="CHEBI:128769"/>
    </ligand>
</feature>
<feature type="binding site" evidence="1">
    <location>
        <position position="167"/>
    </location>
    <ligand>
        <name>(2E)-4-hydroxy-3-methylbut-2-enyl diphosphate</name>
        <dbReference type="ChEBI" id="CHEBI:128753"/>
    </ligand>
</feature>
<feature type="binding site" evidence="1">
    <location>
        <position position="197"/>
    </location>
    <ligand>
        <name>[4Fe-4S] cluster</name>
        <dbReference type="ChEBI" id="CHEBI:49883"/>
    </ligand>
</feature>
<feature type="binding site" evidence="1">
    <location>
        <position position="225"/>
    </location>
    <ligand>
        <name>(2E)-4-hydroxy-3-methylbut-2-enyl diphosphate</name>
        <dbReference type="ChEBI" id="CHEBI:128753"/>
    </ligand>
</feature>
<feature type="binding site" evidence="1">
    <location>
        <position position="225"/>
    </location>
    <ligand>
        <name>dimethylallyl diphosphate</name>
        <dbReference type="ChEBI" id="CHEBI:57623"/>
    </ligand>
</feature>
<feature type="binding site" evidence="1">
    <location>
        <position position="225"/>
    </location>
    <ligand>
        <name>isopentenyl diphosphate</name>
        <dbReference type="ChEBI" id="CHEBI:128769"/>
    </ligand>
</feature>
<feature type="binding site" evidence="1">
    <location>
        <position position="226"/>
    </location>
    <ligand>
        <name>(2E)-4-hydroxy-3-methylbut-2-enyl diphosphate</name>
        <dbReference type="ChEBI" id="CHEBI:128753"/>
    </ligand>
</feature>
<feature type="binding site" evidence="1">
    <location>
        <position position="226"/>
    </location>
    <ligand>
        <name>dimethylallyl diphosphate</name>
        <dbReference type="ChEBI" id="CHEBI:57623"/>
    </ligand>
</feature>
<feature type="binding site" evidence="1">
    <location>
        <position position="226"/>
    </location>
    <ligand>
        <name>isopentenyl diphosphate</name>
        <dbReference type="ChEBI" id="CHEBI:128769"/>
    </ligand>
</feature>
<feature type="binding site" evidence="1">
    <location>
        <position position="227"/>
    </location>
    <ligand>
        <name>(2E)-4-hydroxy-3-methylbut-2-enyl diphosphate</name>
        <dbReference type="ChEBI" id="CHEBI:128753"/>
    </ligand>
</feature>
<feature type="binding site" evidence="1">
    <location>
        <position position="227"/>
    </location>
    <ligand>
        <name>dimethylallyl diphosphate</name>
        <dbReference type="ChEBI" id="CHEBI:57623"/>
    </ligand>
</feature>
<feature type="binding site" evidence="1">
    <location>
        <position position="227"/>
    </location>
    <ligand>
        <name>isopentenyl diphosphate</name>
        <dbReference type="ChEBI" id="CHEBI:128769"/>
    </ligand>
</feature>
<feature type="binding site" evidence="1">
    <location>
        <position position="269"/>
    </location>
    <ligand>
        <name>(2E)-4-hydroxy-3-methylbut-2-enyl diphosphate</name>
        <dbReference type="ChEBI" id="CHEBI:128753"/>
    </ligand>
</feature>
<feature type="binding site" evidence="1">
    <location>
        <position position="269"/>
    </location>
    <ligand>
        <name>dimethylallyl diphosphate</name>
        <dbReference type="ChEBI" id="CHEBI:57623"/>
    </ligand>
</feature>
<feature type="binding site" evidence="1">
    <location>
        <position position="269"/>
    </location>
    <ligand>
        <name>isopentenyl diphosphate</name>
        <dbReference type="ChEBI" id="CHEBI:128769"/>
    </ligand>
</feature>
<reference key="1">
    <citation type="journal article" date="2010" name="PLoS Genet.">
        <title>Genome sequence of the plant growth promoting endophytic bacterium Enterobacter sp. 638.</title>
        <authorList>
            <person name="Taghavi S."/>
            <person name="van der Lelie D."/>
            <person name="Hoffman A."/>
            <person name="Zhang Y.B."/>
            <person name="Walla M.D."/>
            <person name="Vangronsveld J."/>
            <person name="Newman L."/>
            <person name="Monchy S."/>
        </authorList>
    </citation>
    <scope>NUCLEOTIDE SEQUENCE [LARGE SCALE GENOMIC DNA]</scope>
    <source>
        <strain>638</strain>
    </source>
</reference>
<gene>
    <name evidence="1" type="primary">ispH</name>
    <name type="ordered locus">Ent638_0587</name>
</gene>
<organism>
    <name type="scientific">Enterobacter sp. (strain 638)</name>
    <dbReference type="NCBI Taxonomy" id="399742"/>
    <lineage>
        <taxon>Bacteria</taxon>
        <taxon>Pseudomonadati</taxon>
        <taxon>Pseudomonadota</taxon>
        <taxon>Gammaproteobacteria</taxon>
        <taxon>Enterobacterales</taxon>
        <taxon>Enterobacteriaceae</taxon>
        <taxon>Enterobacter</taxon>
    </lineage>
</organism>
<accession>A4W6E4</accession>